<dbReference type="EMBL" id="M61157">
    <property type="protein sequence ID" value="AAA28495.1"/>
    <property type="molecule type" value="mRNA"/>
</dbReference>
<dbReference type="EMBL" id="AE014298">
    <property type="protein sequence ID" value="AAF48410.1"/>
    <property type="molecule type" value="Genomic_DNA"/>
</dbReference>
<dbReference type="PIR" id="A40853">
    <property type="entry name" value="A40853"/>
</dbReference>
<dbReference type="RefSeq" id="NP_511158.2">
    <property type="nucleotide sequence ID" value="NM_078603.4"/>
</dbReference>
<dbReference type="PDB" id="5FG8">
    <property type="method" value="X-ray"/>
    <property type="resolution" value="1.96 A"/>
    <property type="chains" value="B=768-820"/>
</dbReference>
<dbReference type="PDB" id="5H9B">
    <property type="method" value="X-ray"/>
    <property type="resolution" value="2.25 A"/>
    <property type="chains" value="B=770-820"/>
</dbReference>
<dbReference type="PDB" id="5HU3">
    <property type="method" value="X-ray"/>
    <property type="resolution" value="1.89 A"/>
    <property type="chains" value="B=768-820"/>
</dbReference>
<dbReference type="PDBsum" id="5FG8"/>
<dbReference type="PDBsum" id="5H9B"/>
<dbReference type="PDBsum" id="5HU3"/>
<dbReference type="SMR" id="Q02280"/>
<dbReference type="BioGRID" id="58786">
    <property type="interactions" value="9"/>
</dbReference>
<dbReference type="FunCoup" id="Q02280">
    <property type="interactions" value="332"/>
</dbReference>
<dbReference type="IntAct" id="Q02280">
    <property type="interactions" value="3"/>
</dbReference>
<dbReference type="STRING" id="7227.FBpp0110308"/>
<dbReference type="TCDB" id="1.A.1.20.6">
    <property type="family name" value="the voltage-gated ion channel (vic) superfamily"/>
</dbReference>
<dbReference type="GlyCosmos" id="Q02280">
    <property type="glycosylation" value="3 sites, No reported glycans"/>
</dbReference>
<dbReference type="GlyGen" id="Q02280">
    <property type="glycosylation" value="5 sites"/>
</dbReference>
<dbReference type="iPTMnet" id="Q02280"/>
<dbReference type="PaxDb" id="7227-FBpp0110308"/>
<dbReference type="EnsemblMetazoa" id="FBtr0073955">
    <property type="protein sequence ID" value="FBpp0073772"/>
    <property type="gene ID" value="FBgn0000535"/>
</dbReference>
<dbReference type="GeneID" id="32428"/>
<dbReference type="KEGG" id="dme:Dmel_CG10952"/>
<dbReference type="AGR" id="FB:FBgn0000535"/>
<dbReference type="CTD" id="32428"/>
<dbReference type="FlyBase" id="FBgn0000535">
    <property type="gene designation" value="eag"/>
</dbReference>
<dbReference type="VEuPathDB" id="VectorBase:FBgn0000535"/>
<dbReference type="eggNOG" id="KOG0501">
    <property type="taxonomic scope" value="Eukaryota"/>
</dbReference>
<dbReference type="GeneTree" id="ENSGT00940000155793"/>
<dbReference type="HOGENOM" id="CLU_005746_3_1_1"/>
<dbReference type="InParanoid" id="Q02280"/>
<dbReference type="OrthoDB" id="447251at2759"/>
<dbReference type="PhylomeDB" id="Q02280"/>
<dbReference type="Reactome" id="R-DME-1296072">
    <property type="pathway name" value="Voltage gated Potassium channels"/>
</dbReference>
<dbReference type="BioGRID-ORCS" id="32428">
    <property type="hits" value="0 hits in 3 CRISPR screens"/>
</dbReference>
<dbReference type="GenomeRNAi" id="32428"/>
<dbReference type="PRO" id="PR:Q02280"/>
<dbReference type="Proteomes" id="UP000000803">
    <property type="component" value="Chromosome X"/>
</dbReference>
<dbReference type="Bgee" id="FBgn0000535">
    <property type="expression patterns" value="Expressed in ocellus retinula cell (Drosophila) in insect head and 169 other cell types or tissues"/>
</dbReference>
<dbReference type="ExpressionAtlas" id="Q02280">
    <property type="expression patterns" value="baseline and differential"/>
</dbReference>
<dbReference type="GO" id="GO:0005886">
    <property type="term" value="C:plasma membrane"/>
    <property type="evidence" value="ECO:0000314"/>
    <property type="project" value="FlyBase"/>
</dbReference>
<dbReference type="GO" id="GO:0008076">
    <property type="term" value="C:voltage-gated potassium channel complex"/>
    <property type="evidence" value="ECO:0000353"/>
    <property type="project" value="FlyBase"/>
</dbReference>
<dbReference type="GO" id="GO:0044325">
    <property type="term" value="F:transmembrane transporter binding"/>
    <property type="evidence" value="ECO:0000353"/>
    <property type="project" value="FlyBase"/>
</dbReference>
<dbReference type="GO" id="GO:0022843">
    <property type="term" value="F:voltage-gated monoatomic cation channel activity"/>
    <property type="evidence" value="ECO:0000314"/>
    <property type="project" value="FlyBase"/>
</dbReference>
<dbReference type="GO" id="GO:0005249">
    <property type="term" value="F:voltage-gated potassium channel activity"/>
    <property type="evidence" value="ECO:0000314"/>
    <property type="project" value="FlyBase"/>
</dbReference>
<dbReference type="GO" id="GO:0048150">
    <property type="term" value="P:behavioral response to ether"/>
    <property type="evidence" value="ECO:0000303"/>
    <property type="project" value="FlyBase"/>
</dbReference>
<dbReference type="GO" id="GO:0007619">
    <property type="term" value="P:courtship behavior"/>
    <property type="evidence" value="ECO:0000304"/>
    <property type="project" value="FlyBase"/>
</dbReference>
<dbReference type="GO" id="GO:0007612">
    <property type="term" value="P:learning"/>
    <property type="evidence" value="ECO:0000315"/>
    <property type="project" value="FlyBase"/>
</dbReference>
<dbReference type="GO" id="GO:0007611">
    <property type="term" value="P:learning or memory"/>
    <property type="evidence" value="ECO:0000303"/>
    <property type="project" value="FlyBase"/>
</dbReference>
<dbReference type="GO" id="GO:0042066">
    <property type="term" value="P:perineurial glial growth"/>
    <property type="evidence" value="ECO:0000316"/>
    <property type="project" value="FlyBase"/>
</dbReference>
<dbReference type="GO" id="GO:0071805">
    <property type="term" value="P:potassium ion transmembrane transport"/>
    <property type="evidence" value="ECO:0000318"/>
    <property type="project" value="GO_Central"/>
</dbReference>
<dbReference type="GO" id="GO:0006813">
    <property type="term" value="P:potassium ion transport"/>
    <property type="evidence" value="ECO:0000304"/>
    <property type="project" value="FlyBase"/>
</dbReference>
<dbReference type="GO" id="GO:0008016">
    <property type="term" value="P:regulation of heart contraction"/>
    <property type="evidence" value="ECO:0000303"/>
    <property type="project" value="FlyBase"/>
</dbReference>
<dbReference type="GO" id="GO:0042391">
    <property type="term" value="P:regulation of membrane potential"/>
    <property type="evidence" value="ECO:0000318"/>
    <property type="project" value="GO_Central"/>
</dbReference>
<dbReference type="GO" id="GO:0007608">
    <property type="term" value="P:sensory perception of smell"/>
    <property type="evidence" value="ECO:0000303"/>
    <property type="project" value="FlyBase"/>
</dbReference>
<dbReference type="CDD" id="cd00038">
    <property type="entry name" value="CAP_ED"/>
    <property type="match status" value="1"/>
</dbReference>
<dbReference type="CDD" id="cd00130">
    <property type="entry name" value="PAS"/>
    <property type="match status" value="1"/>
</dbReference>
<dbReference type="FunFam" id="1.10.1200.260:FF:000003">
    <property type="entry name" value="Potassium voltage-gated channel subfamily H member 1"/>
    <property type="match status" value="1"/>
</dbReference>
<dbReference type="FunFam" id="2.60.120.10:FF:000009">
    <property type="entry name" value="Potassium voltage-gated channel subfamily H member 1"/>
    <property type="match status" value="1"/>
</dbReference>
<dbReference type="FunFam" id="3.30.450.20:FF:000009">
    <property type="entry name" value="Potassium voltage-gated channel subfamily H member 1"/>
    <property type="match status" value="1"/>
</dbReference>
<dbReference type="Gene3D" id="1.10.1200.260">
    <property type="match status" value="1"/>
</dbReference>
<dbReference type="Gene3D" id="1.10.287.70">
    <property type="match status" value="1"/>
</dbReference>
<dbReference type="Gene3D" id="2.60.120.10">
    <property type="entry name" value="Jelly Rolls"/>
    <property type="match status" value="1"/>
</dbReference>
<dbReference type="Gene3D" id="3.30.450.20">
    <property type="entry name" value="PAS domain"/>
    <property type="match status" value="1"/>
</dbReference>
<dbReference type="InterPro" id="IPR000595">
    <property type="entry name" value="cNMP-bd_dom"/>
</dbReference>
<dbReference type="InterPro" id="IPR018490">
    <property type="entry name" value="cNMP-bd_dom_sf"/>
</dbReference>
<dbReference type="InterPro" id="IPR005821">
    <property type="entry name" value="Ion_trans_dom"/>
</dbReference>
<dbReference type="InterPro" id="IPR003949">
    <property type="entry name" value="K_chnl_volt-dep_EAG"/>
</dbReference>
<dbReference type="InterPro" id="IPR003938">
    <property type="entry name" value="K_chnl_volt-dep_EAG/ELK/ERG"/>
</dbReference>
<dbReference type="InterPro" id="IPR050818">
    <property type="entry name" value="KCNH_animal-type"/>
</dbReference>
<dbReference type="InterPro" id="IPR000014">
    <property type="entry name" value="PAS"/>
</dbReference>
<dbReference type="InterPro" id="IPR000700">
    <property type="entry name" value="PAS-assoc_C"/>
</dbReference>
<dbReference type="InterPro" id="IPR035965">
    <property type="entry name" value="PAS-like_dom_sf"/>
</dbReference>
<dbReference type="InterPro" id="IPR014710">
    <property type="entry name" value="RmlC-like_jellyroll"/>
</dbReference>
<dbReference type="PANTHER" id="PTHR10217:SF435">
    <property type="entry name" value="POTASSIUM VOLTAGE-GATED CHANNEL PROTEIN EAG"/>
    <property type="match status" value="1"/>
</dbReference>
<dbReference type="PANTHER" id="PTHR10217">
    <property type="entry name" value="VOLTAGE AND LIGAND GATED POTASSIUM CHANNEL"/>
    <property type="match status" value="1"/>
</dbReference>
<dbReference type="Pfam" id="PF00027">
    <property type="entry name" value="cNMP_binding"/>
    <property type="match status" value="1"/>
</dbReference>
<dbReference type="Pfam" id="PF00520">
    <property type="entry name" value="Ion_trans"/>
    <property type="match status" value="1"/>
</dbReference>
<dbReference type="Pfam" id="PF13426">
    <property type="entry name" value="PAS_9"/>
    <property type="match status" value="1"/>
</dbReference>
<dbReference type="PRINTS" id="PR01463">
    <property type="entry name" value="EAGCHANLFMLY"/>
</dbReference>
<dbReference type="PRINTS" id="PR01464">
    <property type="entry name" value="EAGCHANNEL"/>
</dbReference>
<dbReference type="SMART" id="SM00100">
    <property type="entry name" value="cNMP"/>
    <property type="match status" value="1"/>
</dbReference>
<dbReference type="SUPFAM" id="SSF51206">
    <property type="entry name" value="cAMP-binding domain-like"/>
    <property type="match status" value="1"/>
</dbReference>
<dbReference type="SUPFAM" id="SSF55785">
    <property type="entry name" value="PYP-like sensor domain (PAS domain)"/>
    <property type="match status" value="1"/>
</dbReference>
<dbReference type="SUPFAM" id="SSF81324">
    <property type="entry name" value="Voltage-gated potassium channels"/>
    <property type="match status" value="1"/>
</dbReference>
<dbReference type="PROSITE" id="PS50042">
    <property type="entry name" value="CNMP_BINDING_3"/>
    <property type="match status" value="1"/>
</dbReference>
<dbReference type="PROSITE" id="PS50113">
    <property type="entry name" value="PAC"/>
    <property type="match status" value="1"/>
</dbReference>
<dbReference type="PROSITE" id="PS50112">
    <property type="entry name" value="PAS"/>
    <property type="match status" value="1"/>
</dbReference>
<proteinExistence type="evidence at protein level"/>
<organism>
    <name type="scientific">Drosophila melanogaster</name>
    <name type="common">Fruit fly</name>
    <dbReference type="NCBI Taxonomy" id="7227"/>
    <lineage>
        <taxon>Eukaryota</taxon>
        <taxon>Metazoa</taxon>
        <taxon>Ecdysozoa</taxon>
        <taxon>Arthropoda</taxon>
        <taxon>Hexapoda</taxon>
        <taxon>Insecta</taxon>
        <taxon>Pterygota</taxon>
        <taxon>Neoptera</taxon>
        <taxon>Endopterygota</taxon>
        <taxon>Diptera</taxon>
        <taxon>Brachycera</taxon>
        <taxon>Muscomorpha</taxon>
        <taxon>Ephydroidea</taxon>
        <taxon>Drosophilidae</taxon>
        <taxon>Drosophila</taxon>
        <taxon>Sophophora</taxon>
    </lineage>
</organism>
<comment type="function">
    <text evidence="7 8 9 10">Structural component of a potassium channel. Mediates the potassium permeability of membranes; potassium current is regulated by CaMKII and CASK. Has a role in growth of the perineurial glial layer of the larval peripheral nerve.</text>
</comment>
<comment type="subunit">
    <text evidence="1">The voltage-dependent potassium channel is a heterotetramer of potassium channel proteins (By similarity). Interaction with CASK.</text>
</comment>
<comment type="interaction">
    <interactant intactId="EBI-85304">
        <id>Q02280</id>
    </interactant>
    <interactant intactId="EBI-214423">
        <id>Q24210</id>
        <label>CASK</label>
    </interactant>
    <organismsDiffer>false</organismsDiffer>
    <experiments>10</experiments>
</comment>
<comment type="subcellular location">
    <subcellularLocation>
        <location evidence="9">Membrane</location>
        <topology evidence="9">Multi-pass membrane protein</topology>
    </subcellularLocation>
    <text>Eag recruits CASK to the plasma membrane.</text>
</comment>
<comment type="tissue specificity">
    <text evidence="8">Expressed in the axon and the terminal boutons of motor neurons.</text>
</comment>
<comment type="PTM">
    <text evidence="8">When in complex with CASK, the efficiency of Thr-787 phosphorylation is increased.</text>
</comment>
<comment type="disruption phenotype">
    <text evidence="6 10">Increased growth of the perineurial glial layer of the larval peripheral nerve (PubMed:1840699). Hyperexcitability at the larval neuromuscular junction (NMJ) and memory formation defects in the adult (PubMed:1840699). Hypersensitivity to reactive oxygen species generated by the redox-cycling agent paraquat (PubMed:10934243).</text>
</comment>
<comment type="miscellaneous">
    <text>The segment S4 is probably the voltage-sensor and is characterized by a series of positively charged amino acids at every third position.</text>
</comment>
<comment type="miscellaneous">
    <text>The segment H5 is thought to line the channel pore.</text>
</comment>
<comment type="similarity">
    <text evidence="11">Belongs to the potassium channel family. H (Eag) (TC 1.A.1.20) subfamily. Eag sub-subfamily.</text>
</comment>
<reference key="1">
    <citation type="journal article" date="1991" name="Science">
        <title>A distinct potassium channel polypeptide encoded by the Drosophila eag locus.</title>
        <authorList>
            <person name="Warmke J."/>
            <person name="Drysdale R.A."/>
            <person name="Ganetzky B."/>
        </authorList>
    </citation>
    <scope>NUCLEOTIDE SEQUENCE [MRNA]</scope>
    <scope>FUNCTION</scope>
    <scope>DISRUPTION PHENOTYPE</scope>
    <source>
        <tissue>Head</tissue>
    </source>
</reference>
<reference key="2">
    <citation type="journal article" date="2000" name="Science">
        <title>The genome sequence of Drosophila melanogaster.</title>
        <authorList>
            <person name="Adams M.D."/>
            <person name="Celniker S.E."/>
            <person name="Holt R.A."/>
            <person name="Evans C.A."/>
            <person name="Gocayne J.D."/>
            <person name="Amanatides P.G."/>
            <person name="Scherer S.E."/>
            <person name="Li P.W."/>
            <person name="Hoskins R.A."/>
            <person name="Galle R.F."/>
            <person name="George R.A."/>
            <person name="Lewis S.E."/>
            <person name="Richards S."/>
            <person name="Ashburner M."/>
            <person name="Henderson S.N."/>
            <person name="Sutton G.G."/>
            <person name="Wortman J.R."/>
            <person name="Yandell M.D."/>
            <person name="Zhang Q."/>
            <person name="Chen L.X."/>
            <person name="Brandon R.C."/>
            <person name="Rogers Y.-H.C."/>
            <person name="Blazej R.G."/>
            <person name="Champe M."/>
            <person name="Pfeiffer B.D."/>
            <person name="Wan K.H."/>
            <person name="Doyle C."/>
            <person name="Baxter E.G."/>
            <person name="Helt G."/>
            <person name="Nelson C.R."/>
            <person name="Miklos G.L.G."/>
            <person name="Abril J.F."/>
            <person name="Agbayani A."/>
            <person name="An H.-J."/>
            <person name="Andrews-Pfannkoch C."/>
            <person name="Baldwin D."/>
            <person name="Ballew R.M."/>
            <person name="Basu A."/>
            <person name="Baxendale J."/>
            <person name="Bayraktaroglu L."/>
            <person name="Beasley E.M."/>
            <person name="Beeson K.Y."/>
            <person name="Benos P.V."/>
            <person name="Berman B.P."/>
            <person name="Bhandari D."/>
            <person name="Bolshakov S."/>
            <person name="Borkova D."/>
            <person name="Botchan M.R."/>
            <person name="Bouck J."/>
            <person name="Brokstein P."/>
            <person name="Brottier P."/>
            <person name="Burtis K.C."/>
            <person name="Busam D.A."/>
            <person name="Butler H."/>
            <person name="Cadieu E."/>
            <person name="Center A."/>
            <person name="Chandra I."/>
            <person name="Cherry J.M."/>
            <person name="Cawley S."/>
            <person name="Dahlke C."/>
            <person name="Davenport L.B."/>
            <person name="Davies P."/>
            <person name="de Pablos B."/>
            <person name="Delcher A."/>
            <person name="Deng Z."/>
            <person name="Mays A.D."/>
            <person name="Dew I."/>
            <person name="Dietz S.M."/>
            <person name="Dodson K."/>
            <person name="Doup L.E."/>
            <person name="Downes M."/>
            <person name="Dugan-Rocha S."/>
            <person name="Dunkov B.C."/>
            <person name="Dunn P."/>
            <person name="Durbin K.J."/>
            <person name="Evangelista C.C."/>
            <person name="Ferraz C."/>
            <person name="Ferriera S."/>
            <person name="Fleischmann W."/>
            <person name="Fosler C."/>
            <person name="Gabrielian A.E."/>
            <person name="Garg N.S."/>
            <person name="Gelbart W.M."/>
            <person name="Glasser K."/>
            <person name="Glodek A."/>
            <person name="Gong F."/>
            <person name="Gorrell J.H."/>
            <person name="Gu Z."/>
            <person name="Guan P."/>
            <person name="Harris M."/>
            <person name="Harris N.L."/>
            <person name="Harvey D.A."/>
            <person name="Heiman T.J."/>
            <person name="Hernandez J.R."/>
            <person name="Houck J."/>
            <person name="Hostin D."/>
            <person name="Houston K.A."/>
            <person name="Howland T.J."/>
            <person name="Wei M.-H."/>
            <person name="Ibegwam C."/>
            <person name="Jalali M."/>
            <person name="Kalush F."/>
            <person name="Karpen G.H."/>
            <person name="Ke Z."/>
            <person name="Kennison J.A."/>
            <person name="Ketchum K.A."/>
            <person name="Kimmel B.E."/>
            <person name="Kodira C.D."/>
            <person name="Kraft C.L."/>
            <person name="Kravitz S."/>
            <person name="Kulp D."/>
            <person name="Lai Z."/>
            <person name="Lasko P."/>
            <person name="Lei Y."/>
            <person name="Levitsky A.A."/>
            <person name="Li J.H."/>
            <person name="Li Z."/>
            <person name="Liang Y."/>
            <person name="Lin X."/>
            <person name="Liu X."/>
            <person name="Mattei B."/>
            <person name="McIntosh T.C."/>
            <person name="McLeod M.P."/>
            <person name="McPherson D."/>
            <person name="Merkulov G."/>
            <person name="Milshina N.V."/>
            <person name="Mobarry C."/>
            <person name="Morris J."/>
            <person name="Moshrefi A."/>
            <person name="Mount S.M."/>
            <person name="Moy M."/>
            <person name="Murphy B."/>
            <person name="Murphy L."/>
            <person name="Muzny D.M."/>
            <person name="Nelson D.L."/>
            <person name="Nelson D.R."/>
            <person name="Nelson K.A."/>
            <person name="Nixon K."/>
            <person name="Nusskern D.R."/>
            <person name="Pacleb J.M."/>
            <person name="Palazzolo M."/>
            <person name="Pittman G.S."/>
            <person name="Pan S."/>
            <person name="Pollard J."/>
            <person name="Puri V."/>
            <person name="Reese M.G."/>
            <person name="Reinert K."/>
            <person name="Remington K."/>
            <person name="Saunders R.D.C."/>
            <person name="Scheeler F."/>
            <person name="Shen H."/>
            <person name="Shue B.C."/>
            <person name="Siden-Kiamos I."/>
            <person name="Simpson M."/>
            <person name="Skupski M.P."/>
            <person name="Smith T.J."/>
            <person name="Spier E."/>
            <person name="Spradling A.C."/>
            <person name="Stapleton M."/>
            <person name="Strong R."/>
            <person name="Sun E."/>
            <person name="Svirskas R."/>
            <person name="Tector C."/>
            <person name="Turner R."/>
            <person name="Venter E."/>
            <person name="Wang A.H."/>
            <person name="Wang X."/>
            <person name="Wang Z.-Y."/>
            <person name="Wassarman D.A."/>
            <person name="Weinstock G.M."/>
            <person name="Weissenbach J."/>
            <person name="Williams S.M."/>
            <person name="Woodage T."/>
            <person name="Worley K.C."/>
            <person name="Wu D."/>
            <person name="Yang S."/>
            <person name="Yao Q.A."/>
            <person name="Ye J."/>
            <person name="Yeh R.-F."/>
            <person name="Zaveri J.S."/>
            <person name="Zhan M."/>
            <person name="Zhang G."/>
            <person name="Zhao Q."/>
            <person name="Zheng L."/>
            <person name="Zheng X.H."/>
            <person name="Zhong F.N."/>
            <person name="Zhong W."/>
            <person name="Zhou X."/>
            <person name="Zhu S.C."/>
            <person name="Zhu X."/>
            <person name="Smith H.O."/>
            <person name="Gibbs R.A."/>
            <person name="Myers E.W."/>
            <person name="Rubin G.M."/>
            <person name="Venter J.C."/>
        </authorList>
    </citation>
    <scope>NUCLEOTIDE SEQUENCE [LARGE SCALE GENOMIC DNA]</scope>
    <source>
        <strain>Berkeley</strain>
    </source>
</reference>
<reference key="3">
    <citation type="journal article" date="2002" name="Genome Biol.">
        <title>Annotation of the Drosophila melanogaster euchromatic genome: a systematic review.</title>
        <authorList>
            <person name="Misra S."/>
            <person name="Crosby M.A."/>
            <person name="Mungall C.J."/>
            <person name="Matthews B.B."/>
            <person name="Campbell K.S."/>
            <person name="Hradecky P."/>
            <person name="Huang Y."/>
            <person name="Kaminker J.S."/>
            <person name="Millburn G.H."/>
            <person name="Prochnik S.E."/>
            <person name="Smith C.D."/>
            <person name="Tupy J.L."/>
            <person name="Whitfield E.J."/>
            <person name="Bayraktaroglu L."/>
            <person name="Berman B.P."/>
            <person name="Bettencourt B.R."/>
            <person name="Celniker S.E."/>
            <person name="de Grey A.D.N.J."/>
            <person name="Drysdale R.A."/>
            <person name="Harris N.L."/>
            <person name="Richter J."/>
            <person name="Russo S."/>
            <person name="Schroeder A.J."/>
            <person name="Shu S.Q."/>
            <person name="Stapleton M."/>
            <person name="Yamada C."/>
            <person name="Ashburner M."/>
            <person name="Gelbart W.M."/>
            <person name="Rubin G.M."/>
            <person name="Lewis S.E."/>
        </authorList>
    </citation>
    <scope>GENOME REANNOTATION</scope>
    <source>
        <strain>Berkeley</strain>
    </source>
</reference>
<reference key="4">
    <citation type="journal article" date="2000" name="J. Neurosci.">
        <title>A novel leg-shaking Drosophila mutant defective in a voltage-gated K(+)current and hypersensitive to reactive oxygen species.</title>
        <authorList>
            <person name="Wang J.W."/>
            <person name="Humphreys J.M."/>
            <person name="Phillips J.P."/>
            <person name="Hilliker A.J."/>
            <person name="Wu C.F."/>
        </authorList>
    </citation>
    <scope>DISRUPTION PHENOTYPE</scope>
</reference>
<reference key="5">
    <citation type="journal article" date="2001" name="Proc. Natl. Acad. Sci. U.S.A.">
        <title>Control of Drosophila perineurial glial growth by interacting neurotransmitter-mediated signaling pathways.</title>
        <authorList>
            <person name="Yager J."/>
            <person name="Richards S."/>
            <person name="Hekmat-Scafe D.S."/>
            <person name="Hurd D.D."/>
            <person name="Sundaresan V."/>
            <person name="Caprette D.R."/>
            <person name="Saxton W.M."/>
            <person name="Carlson J.R."/>
            <person name="Stern M."/>
        </authorList>
    </citation>
    <scope>FUNCTION</scope>
</reference>
<reference key="6">
    <citation type="journal article" date="2002" name="J. Biol. Chem.">
        <title>Calcium/calmodulin-dependent protein kinase II phosphorylates and regulates the Drosophila eag potassium channel.</title>
        <authorList>
            <person name="Wang Z."/>
            <person name="Wilson G.F."/>
            <person name="Griffith L.C."/>
        </authorList>
    </citation>
    <scope>FUNCTION</scope>
    <scope>PHOSPHORYLATION AT THR-787</scope>
    <scope>MUTAGENESIS OF THR-787</scope>
    <scope>TISSUE SPECIFICITY</scope>
</reference>
<reference key="7">
    <citation type="journal article" date="2005" name="J. Neurosci.">
        <title>Camguk/CASK enhances Ether-a-go-go potassium current by a phosphorylation-dependent mechanism.</title>
        <authorList>
            <person name="Marble D.D."/>
            <person name="Hegle A.P."/>
            <person name="Snyder E.D. II"/>
            <person name="Dimitratos S."/>
            <person name="Bryant P.J."/>
            <person name="Wilson G.F."/>
        </authorList>
    </citation>
    <scope>FUNCTION</scope>
    <scope>INTERACTION WITH CASK</scope>
    <scope>SUBCELLULAR LOCATION</scope>
</reference>
<sequence length="1174" mass="126371">MPGGRRGLVAPQNTFLENIIRRSNSQPDSSFLLANAQIVDFPIVYCNESFCKISGYNRAEVMQKSCRYVCGFMYGELTDKETVGRLEYTLENQQQDQFEILLYKKNNLQCGCALSQFGKAQTQETPLWLLLQVAPIRNERDLVVLFLLTFRDITALKQPIDSEDTKGVLGLSKFAKLARSVTRSRQFSAHLPTLKDPTKQSNLAHMMSLSADIMPQYRQEAPKTPPHILLHYCAFKAIWDWVILCLTFYTAIMVPYNVAFKNKTSEDVSLLVVDSIVDVIFFIDIVLNFHTTFVGPGGEVVSDPKVIRMNYLKSWFIIDLLSCLPYDVFNAFDRDEDGIGSLFSALKVVRLLRLGRVVRKLDRYLEYGAAMLILLLCFYMLVAHWLACIWYSIGRSDADNGIQYSWLWKLANVTQSPYSYIWSNDTGPELVNGPSRKSMYVTALYFTMTCMTSVGFGNVAAETDNEKVFTICMMIIAALLYATIFGHVTTIIQQMTSATAKYHDMLNNVREFMKLHEVPKALSERVMDYVVSTWAMTKGLDTEKVLNYCPKDMKADICVHLNRKVFNEHPAFRLASDGCLRALAMHFMMSHSAPGDLLYHTGESIDSLCFIVTGSLEVIQDDEVVAILGKGDVFGDQFWKDSAVGQSAANVRALTYCDLHAIKRDKLLEVLDFYSAFANSFARNLVLTYNLRHRLIFRKVADVKREKELAERRKNEPQLPQNQDHLVRKIFSKFRRTPQVQAGSKELVGGSGQSDVEKGDGEVERTKVFPKAPKLQASQATLARQDTIDEGGEVDSSPPSRDSRVVIEGAAVSSATVGPSPPVATTSSAAAGAGVSGGPGSGGTVVAIVTKADRNLALERERQIEMASSRATTSDTYDTGLRETPPTLAQRDLIATVLDMKVDVRLELQRMQQRIGRIEDLLGELVKRLAPGAGSGGNAPDNSSGQTTPGDEICAGCGAGGGGTPTTQAPPTSAVTSPVDTVITISSPGASGSGSGTGAGAGSAVAGAGGAGLLNPGATVVSSAGGNGLGPLMLKKRRSKSRKAPAPPKQTLASTAGTATAAPAGVAGSGMTSSAPASADQQQQHQSTADQSPTTPGAELLHLRLLEEDFTAAQLPSTSSGGAGGGGGSGSGATPTTPPPTTAGGSGSGTPTSTTATTTPTGSGTATRGKLDFL</sequence>
<feature type="chain" id="PRO_0000053964" description="Potassium voltage-gated channel protein eag">
    <location>
        <begin position="1"/>
        <end position="1174"/>
    </location>
</feature>
<feature type="topological domain" description="Cytoplasmic" evidence="2">
    <location>
        <begin position="1"/>
        <end position="226"/>
    </location>
</feature>
<feature type="transmembrane region" description="Helical; Name=Segment S1" evidence="2">
    <location>
        <begin position="227"/>
        <end position="246"/>
    </location>
</feature>
<feature type="topological domain" description="Extracellular" evidence="2">
    <location>
        <begin position="247"/>
        <end position="268"/>
    </location>
</feature>
<feature type="transmembrane region" description="Helical; Name=Segment S2" evidence="2">
    <location>
        <begin position="269"/>
        <end position="291"/>
    </location>
</feature>
<feature type="topological domain" description="Cytoplasmic" evidence="2">
    <location>
        <begin position="292"/>
        <end position="313"/>
    </location>
</feature>
<feature type="transmembrane region" description="Helical; Name=Segment S3" evidence="2">
    <location>
        <begin position="314"/>
        <end position="335"/>
    </location>
</feature>
<feature type="topological domain" description="Extracellular" evidence="2">
    <location>
        <begin position="336"/>
        <end position="342"/>
    </location>
</feature>
<feature type="transmembrane region" description="Helical; Voltage-sensor; Name=Segment S4" evidence="2">
    <location>
        <begin position="343"/>
        <end position="369"/>
    </location>
</feature>
<feature type="topological domain" description="Cytoplasmic" evidence="2">
    <location>
        <begin position="370"/>
        <end position="371"/>
    </location>
</feature>
<feature type="transmembrane region" description="Helical; Name=Segment S5" evidence="2">
    <location>
        <begin position="372"/>
        <end position="393"/>
    </location>
</feature>
<feature type="topological domain" description="Extracellular" evidence="2">
    <location>
        <begin position="394"/>
        <end position="441"/>
    </location>
</feature>
<feature type="intramembrane region" description="Pore-forming; Name=Segment H5" evidence="2">
    <location>
        <begin position="442"/>
        <end position="467"/>
    </location>
</feature>
<feature type="topological domain" description="Extracellular" evidence="2">
    <location>
        <begin position="468"/>
        <end position="470"/>
    </location>
</feature>
<feature type="transmembrane region" description="Helical; Name=Segment S6" evidence="2">
    <location>
        <begin position="471"/>
        <end position="493"/>
    </location>
</feature>
<feature type="topological domain" description="Cytoplasmic" evidence="2">
    <location>
        <begin position="494"/>
        <end position="1174"/>
    </location>
</feature>
<feature type="domain" description="PAS" evidence="3">
    <location>
        <begin position="43"/>
        <end position="97"/>
    </location>
</feature>
<feature type="domain" description="PAC" evidence="4">
    <location>
        <begin position="113"/>
        <end position="165"/>
    </location>
</feature>
<feature type="region of interest" description="Disordered" evidence="5">
    <location>
        <begin position="742"/>
        <end position="763"/>
    </location>
</feature>
<feature type="region of interest" description="Disordered" evidence="5">
    <location>
        <begin position="778"/>
        <end position="842"/>
    </location>
</feature>
<feature type="region of interest" description="Disordered" evidence="5">
    <location>
        <begin position="865"/>
        <end position="884"/>
    </location>
</feature>
<feature type="region of interest" description="Disordered" evidence="5">
    <location>
        <begin position="930"/>
        <end position="977"/>
    </location>
</feature>
<feature type="region of interest" description="Disordered" evidence="5">
    <location>
        <begin position="1022"/>
        <end position="1097"/>
    </location>
</feature>
<feature type="region of interest" description="Disordered" evidence="5">
    <location>
        <begin position="1115"/>
        <end position="1174"/>
    </location>
</feature>
<feature type="short sequence motif" description="Selectivity filter" evidence="1">
    <location>
        <begin position="453"/>
        <end position="458"/>
    </location>
</feature>
<feature type="compositionally biased region" description="Low complexity" evidence="5">
    <location>
        <begin position="815"/>
        <end position="833"/>
    </location>
</feature>
<feature type="compositionally biased region" description="Polar residues" evidence="5">
    <location>
        <begin position="940"/>
        <end position="949"/>
    </location>
</feature>
<feature type="compositionally biased region" description="Low complexity" evidence="5">
    <location>
        <begin position="965"/>
        <end position="977"/>
    </location>
</feature>
<feature type="compositionally biased region" description="Basic residues" evidence="5">
    <location>
        <begin position="1034"/>
        <end position="1043"/>
    </location>
</feature>
<feature type="compositionally biased region" description="Low complexity" evidence="5">
    <location>
        <begin position="1049"/>
        <end position="1093"/>
    </location>
</feature>
<feature type="compositionally biased region" description="Gly residues" evidence="5">
    <location>
        <begin position="1121"/>
        <end position="1131"/>
    </location>
</feature>
<feature type="compositionally biased region" description="Low complexity" evidence="5">
    <location>
        <begin position="1149"/>
        <end position="1167"/>
    </location>
</feature>
<feature type="binding site">
    <location>
        <begin position="571"/>
        <end position="688"/>
    </location>
    <ligand>
        <name>a nucleoside 3',5'-cyclic phosphate</name>
        <dbReference type="ChEBI" id="CHEBI:58464"/>
    </ligand>
</feature>
<feature type="modified residue" description="Phosphothreonine; by CaMK2" evidence="8">
    <location>
        <position position="787"/>
    </location>
</feature>
<feature type="glycosylation site" description="N-linked (GlcNAc...) asparagine" evidence="2">
    <location>
        <position position="262"/>
    </location>
</feature>
<feature type="glycosylation site" description="N-linked (GlcNAc...) asparagine" evidence="2">
    <location>
        <position position="412"/>
    </location>
</feature>
<feature type="glycosylation site" description="N-linked (GlcNAc...) asparagine" evidence="2">
    <location>
        <position position="424"/>
    </location>
</feature>
<feature type="mutagenesis site" description="Reduced eag channel amplitude and accelerated inactivation. Does not affect binding with CASK." evidence="8">
    <original>T</original>
    <variation>A</variation>
    <location>
        <position position="787"/>
    </location>
</feature>
<feature type="sequence conflict" description="In Ref. 1; AAA28495." evidence="11" ref="1">
    <original>Y</original>
    <variation>C</variation>
    <location>
        <position position="548"/>
    </location>
</feature>
<feature type="sequence conflict" description="In Ref. 1; AAA28495." evidence="11" ref="1">
    <original>N</original>
    <variation>D</variation>
    <location>
        <position position="567"/>
    </location>
</feature>
<feature type="sequence conflict" description="In Ref. 1; AAA28495." evidence="11" ref="1">
    <original>A</original>
    <variation>T</variation>
    <location>
        <position position="571"/>
    </location>
</feature>
<feature type="sequence conflict" description="In Ref. 1; AAA28495." evidence="11" ref="1">
    <original>K</original>
    <variation>R</variation>
    <location>
        <position position="699"/>
    </location>
</feature>
<feature type="sequence conflict" description="In Ref. 1; AAA28495." evidence="11" ref="1">
    <original>F</original>
    <variation>L</variation>
    <location>
        <position position="769"/>
    </location>
</feature>
<feature type="sequence conflict" description="In Ref. 1; AAA28495." evidence="11" ref="1">
    <original>I</original>
    <variation>V</variation>
    <location>
        <position position="894"/>
    </location>
</feature>
<feature type="sequence conflict" description="In Ref. 1; AAA28495." evidence="11" ref="1">
    <original>G</original>
    <variation>S</variation>
    <location>
        <position position="934"/>
    </location>
</feature>
<feature type="sequence conflict" description="In Ref. 1; AAA28495." evidence="11" ref="1">
    <original>N</original>
    <variation>D</variation>
    <location>
        <position position="1015"/>
    </location>
</feature>
<feature type="sequence conflict" description="In Ref. 1; AAA28495." evidence="11" ref="1">
    <original>R</original>
    <variation>G</variation>
    <location>
        <position position="1042"/>
    </location>
</feature>
<feature type="sequence conflict" description="In Ref. 1; AAA28495." evidence="11" ref="1">
    <original>K</original>
    <variation>E</variation>
    <location>
        <position position="1049"/>
    </location>
</feature>
<feature type="sequence conflict" description="In Ref. 1; AAA28495." evidence="11" ref="1">
    <original>T</original>
    <variation>A</variation>
    <location>
        <position position="1088"/>
    </location>
</feature>
<feature type="sequence conflict" description="In Ref. 1; AAA28495." evidence="11" ref="1">
    <original>T</original>
    <variation>I</variation>
    <location>
        <position position="1142"/>
    </location>
</feature>
<feature type="strand" evidence="12">
    <location>
        <begin position="788"/>
        <end position="791"/>
    </location>
</feature>
<evidence type="ECO:0000250" key="1"/>
<evidence type="ECO:0000255" key="2"/>
<evidence type="ECO:0000255" key="3">
    <source>
        <dbReference type="PROSITE-ProRule" id="PRU00140"/>
    </source>
</evidence>
<evidence type="ECO:0000255" key="4">
    <source>
        <dbReference type="PROSITE-ProRule" id="PRU00141"/>
    </source>
</evidence>
<evidence type="ECO:0000256" key="5">
    <source>
        <dbReference type="SAM" id="MobiDB-lite"/>
    </source>
</evidence>
<evidence type="ECO:0000269" key="6">
    <source>
    </source>
</evidence>
<evidence type="ECO:0000269" key="7">
    <source>
    </source>
</evidence>
<evidence type="ECO:0000269" key="8">
    <source>
    </source>
</evidence>
<evidence type="ECO:0000269" key="9">
    <source>
    </source>
</evidence>
<evidence type="ECO:0000269" key="10">
    <source>
    </source>
</evidence>
<evidence type="ECO:0000305" key="11"/>
<evidence type="ECO:0007829" key="12">
    <source>
        <dbReference type="PDB" id="5FG8"/>
    </source>
</evidence>
<protein>
    <recommendedName>
        <fullName>Potassium voltage-gated channel protein eag</fullName>
    </recommendedName>
    <alternativeName>
        <fullName>Ether-a-go-go protein</fullName>
    </alternativeName>
</protein>
<keyword id="KW-0002">3D-structure</keyword>
<keyword id="KW-0217">Developmental protein</keyword>
<keyword id="KW-0221">Differentiation</keyword>
<keyword id="KW-0325">Glycoprotein</keyword>
<keyword id="KW-0407">Ion channel</keyword>
<keyword id="KW-0406">Ion transport</keyword>
<keyword id="KW-0472">Membrane</keyword>
<keyword id="KW-0524">Neurogenesis</keyword>
<keyword id="KW-0597">Phosphoprotein</keyword>
<keyword id="KW-0630">Potassium</keyword>
<keyword id="KW-0631">Potassium channel</keyword>
<keyword id="KW-0633">Potassium transport</keyword>
<keyword id="KW-1185">Reference proteome</keyword>
<keyword id="KW-0677">Repeat</keyword>
<keyword id="KW-0812">Transmembrane</keyword>
<keyword id="KW-1133">Transmembrane helix</keyword>
<keyword id="KW-0813">Transport</keyword>
<keyword id="KW-0851">Voltage-gated channel</keyword>
<gene>
    <name type="primary">eag</name>
    <name type="ORF">CG10952</name>
</gene>
<name>KCNAE_DROME</name>
<accession>Q02280</accession>
<accession>Q9VXZ6</accession>